<comment type="function">
    <text evidence="1">Hydrolyzes ribosome-free peptidyl-tRNAs (with 1 or more amino acids incorporated), which drop off the ribosome during protein synthesis, or as a result of ribosome stalling.</text>
</comment>
<comment type="function">
    <text evidence="1">Catalyzes the release of premature peptidyl moieties from peptidyl-tRNA molecules trapped in stalled 50S ribosomal subunits, and thus maintains levels of free tRNAs and 50S ribosomes.</text>
</comment>
<comment type="catalytic activity">
    <reaction evidence="1">
        <text>an N-acyl-L-alpha-aminoacyl-tRNA + H2O = an N-acyl-L-amino acid + a tRNA + H(+)</text>
        <dbReference type="Rhea" id="RHEA:54448"/>
        <dbReference type="Rhea" id="RHEA-COMP:10123"/>
        <dbReference type="Rhea" id="RHEA-COMP:13883"/>
        <dbReference type="ChEBI" id="CHEBI:15377"/>
        <dbReference type="ChEBI" id="CHEBI:15378"/>
        <dbReference type="ChEBI" id="CHEBI:59874"/>
        <dbReference type="ChEBI" id="CHEBI:78442"/>
        <dbReference type="ChEBI" id="CHEBI:138191"/>
        <dbReference type="EC" id="3.1.1.29"/>
    </reaction>
</comment>
<comment type="subunit">
    <text evidence="1">Monomer.</text>
</comment>
<comment type="subcellular location">
    <subcellularLocation>
        <location evidence="1">Cytoplasm</location>
    </subcellularLocation>
</comment>
<comment type="similarity">
    <text evidence="1">Belongs to the PTH family.</text>
</comment>
<evidence type="ECO:0000255" key="1">
    <source>
        <dbReference type="HAMAP-Rule" id="MF_00083"/>
    </source>
</evidence>
<protein>
    <recommendedName>
        <fullName evidence="1">Peptidyl-tRNA hydrolase</fullName>
        <shortName evidence="1">Pth</shortName>
        <ecNumber evidence="1">3.1.1.29</ecNumber>
    </recommendedName>
</protein>
<organism>
    <name type="scientific">Escherichia coli (strain UTI89 / UPEC)</name>
    <dbReference type="NCBI Taxonomy" id="364106"/>
    <lineage>
        <taxon>Bacteria</taxon>
        <taxon>Pseudomonadati</taxon>
        <taxon>Pseudomonadota</taxon>
        <taxon>Gammaproteobacteria</taxon>
        <taxon>Enterobacterales</taxon>
        <taxon>Enterobacteriaceae</taxon>
        <taxon>Escherichia</taxon>
    </lineage>
</organism>
<name>PTH_ECOUT</name>
<proteinExistence type="inferred from homology"/>
<sequence length="194" mass="21082">MTIKLIVGLANPGAEYAATRHNAGAWFVDLLAERLRAPLREEAKFFGYTSRVTLGGEDVRLLVPTTFMNLSGKAVAAMASFFRINPDEILVAHDELDLPPGVAKFKLGGGHGGHNGLKDIISKLGNNPNFHRLRIGIGHPGDKNKVVGFVLGKPPVSEQKLIDEAIDEAARCTEMWFTDGLTKATNRLHAFKAQ</sequence>
<gene>
    <name evidence="1" type="primary">pth</name>
    <name type="ordered locus">UTI89_C1398</name>
</gene>
<keyword id="KW-0963">Cytoplasm</keyword>
<keyword id="KW-0378">Hydrolase</keyword>
<keyword id="KW-0694">RNA-binding</keyword>
<keyword id="KW-0820">tRNA-binding</keyword>
<dbReference type="EC" id="3.1.1.29" evidence="1"/>
<dbReference type="EMBL" id="CP000243">
    <property type="protein sequence ID" value="ABE06880.1"/>
    <property type="molecule type" value="Genomic_DNA"/>
</dbReference>
<dbReference type="RefSeq" id="WP_000152933.1">
    <property type="nucleotide sequence ID" value="NZ_CP064825.1"/>
</dbReference>
<dbReference type="SMR" id="Q1RCN4"/>
<dbReference type="GeneID" id="93775269"/>
<dbReference type="KEGG" id="eci:UTI89_C1398"/>
<dbReference type="HOGENOM" id="CLU_062456_3_1_6"/>
<dbReference type="SABIO-RK" id="Q1RCN4"/>
<dbReference type="Proteomes" id="UP000001952">
    <property type="component" value="Chromosome"/>
</dbReference>
<dbReference type="GO" id="GO:0005737">
    <property type="term" value="C:cytoplasm"/>
    <property type="evidence" value="ECO:0007669"/>
    <property type="project" value="UniProtKB-SubCell"/>
</dbReference>
<dbReference type="GO" id="GO:0004045">
    <property type="term" value="F:peptidyl-tRNA hydrolase activity"/>
    <property type="evidence" value="ECO:0007669"/>
    <property type="project" value="UniProtKB-UniRule"/>
</dbReference>
<dbReference type="GO" id="GO:0000049">
    <property type="term" value="F:tRNA binding"/>
    <property type="evidence" value="ECO:0007669"/>
    <property type="project" value="UniProtKB-UniRule"/>
</dbReference>
<dbReference type="GO" id="GO:0006515">
    <property type="term" value="P:protein quality control for misfolded or incompletely synthesized proteins"/>
    <property type="evidence" value="ECO:0007669"/>
    <property type="project" value="UniProtKB-UniRule"/>
</dbReference>
<dbReference type="GO" id="GO:0072344">
    <property type="term" value="P:rescue of stalled ribosome"/>
    <property type="evidence" value="ECO:0007669"/>
    <property type="project" value="UniProtKB-UniRule"/>
</dbReference>
<dbReference type="CDD" id="cd00462">
    <property type="entry name" value="PTH"/>
    <property type="match status" value="1"/>
</dbReference>
<dbReference type="FunFam" id="3.40.50.1470:FF:000001">
    <property type="entry name" value="Peptidyl-tRNA hydrolase"/>
    <property type="match status" value="1"/>
</dbReference>
<dbReference type="Gene3D" id="3.40.50.1470">
    <property type="entry name" value="Peptidyl-tRNA hydrolase"/>
    <property type="match status" value="1"/>
</dbReference>
<dbReference type="HAMAP" id="MF_00083">
    <property type="entry name" value="Pept_tRNA_hydro_bact"/>
    <property type="match status" value="1"/>
</dbReference>
<dbReference type="InterPro" id="IPR001328">
    <property type="entry name" value="Pept_tRNA_hydro"/>
</dbReference>
<dbReference type="InterPro" id="IPR018171">
    <property type="entry name" value="Pept_tRNA_hydro_CS"/>
</dbReference>
<dbReference type="InterPro" id="IPR036416">
    <property type="entry name" value="Pept_tRNA_hydro_sf"/>
</dbReference>
<dbReference type="NCBIfam" id="TIGR00447">
    <property type="entry name" value="pth"/>
    <property type="match status" value="1"/>
</dbReference>
<dbReference type="PANTHER" id="PTHR17224">
    <property type="entry name" value="PEPTIDYL-TRNA HYDROLASE"/>
    <property type="match status" value="1"/>
</dbReference>
<dbReference type="PANTHER" id="PTHR17224:SF1">
    <property type="entry name" value="PEPTIDYL-TRNA HYDROLASE"/>
    <property type="match status" value="1"/>
</dbReference>
<dbReference type="Pfam" id="PF01195">
    <property type="entry name" value="Pept_tRNA_hydro"/>
    <property type="match status" value="1"/>
</dbReference>
<dbReference type="SUPFAM" id="SSF53178">
    <property type="entry name" value="Peptidyl-tRNA hydrolase-like"/>
    <property type="match status" value="1"/>
</dbReference>
<dbReference type="PROSITE" id="PS01195">
    <property type="entry name" value="PEPT_TRNA_HYDROL_1"/>
    <property type="match status" value="1"/>
</dbReference>
<dbReference type="PROSITE" id="PS01196">
    <property type="entry name" value="PEPT_TRNA_HYDROL_2"/>
    <property type="match status" value="1"/>
</dbReference>
<accession>Q1RCN4</accession>
<feature type="chain" id="PRO_0000264036" description="Peptidyl-tRNA hydrolase">
    <location>
        <begin position="1"/>
        <end position="194"/>
    </location>
</feature>
<feature type="active site" description="Proton acceptor" evidence="1">
    <location>
        <position position="21"/>
    </location>
</feature>
<feature type="binding site" evidence="1">
    <location>
        <position position="16"/>
    </location>
    <ligand>
        <name>tRNA</name>
        <dbReference type="ChEBI" id="CHEBI:17843"/>
    </ligand>
</feature>
<feature type="binding site" evidence="1">
    <location>
        <position position="67"/>
    </location>
    <ligand>
        <name>tRNA</name>
        <dbReference type="ChEBI" id="CHEBI:17843"/>
    </ligand>
</feature>
<feature type="binding site" evidence="1">
    <location>
        <position position="69"/>
    </location>
    <ligand>
        <name>tRNA</name>
        <dbReference type="ChEBI" id="CHEBI:17843"/>
    </ligand>
</feature>
<feature type="binding site" evidence="1">
    <location>
        <position position="115"/>
    </location>
    <ligand>
        <name>tRNA</name>
        <dbReference type="ChEBI" id="CHEBI:17843"/>
    </ligand>
</feature>
<feature type="site" description="Discriminates between blocked and unblocked aminoacyl-tRNA" evidence="1">
    <location>
        <position position="11"/>
    </location>
</feature>
<feature type="site" description="Stabilizes the basic form of H active site to accept a proton" evidence="1">
    <location>
        <position position="94"/>
    </location>
</feature>
<reference key="1">
    <citation type="journal article" date="2006" name="Proc. Natl. Acad. Sci. U.S.A.">
        <title>Identification of genes subject to positive selection in uropathogenic strains of Escherichia coli: a comparative genomics approach.</title>
        <authorList>
            <person name="Chen S.L."/>
            <person name="Hung C.-S."/>
            <person name="Xu J."/>
            <person name="Reigstad C.S."/>
            <person name="Magrini V."/>
            <person name="Sabo A."/>
            <person name="Blasiar D."/>
            <person name="Bieri T."/>
            <person name="Meyer R.R."/>
            <person name="Ozersky P."/>
            <person name="Armstrong J.R."/>
            <person name="Fulton R.S."/>
            <person name="Latreille J.P."/>
            <person name="Spieth J."/>
            <person name="Hooton T.M."/>
            <person name="Mardis E.R."/>
            <person name="Hultgren S.J."/>
            <person name="Gordon J.I."/>
        </authorList>
    </citation>
    <scope>NUCLEOTIDE SEQUENCE [LARGE SCALE GENOMIC DNA]</scope>
    <source>
        <strain>UTI89 / UPEC</strain>
    </source>
</reference>